<comment type="function">
    <text evidence="1 5 8 9">Plasma membrane Na(+)/H(+) antiporter. Mediates the electroneutral exchange of intracellular H(+) ions for extracellular Na(+) (PubMed:10678742, PubMed:8244988, PubMed:8244989). Major apical Na(+)/H(+) exchanger in the base of the colonic crypt. Controls in the colonic crypt intracellular pH (pHi) to direct colonic epithelial cell differentiation into the absorptive enterocyte lineage at the expense of the secretory lineage (By similarity).</text>
</comment>
<comment type="catalytic activity">
    <reaction evidence="5 8 9">
        <text>Na(+)(in) + H(+)(out) = Na(+)(out) + H(+)(in)</text>
        <dbReference type="Rhea" id="RHEA:29419"/>
        <dbReference type="ChEBI" id="CHEBI:15378"/>
        <dbReference type="ChEBI" id="CHEBI:29101"/>
    </reaction>
</comment>
<comment type="activity regulation">
    <text evidence="5">Li(+) activates Na(+)/H(+) exchanger.</text>
</comment>
<comment type="biophysicochemical properties">
    <kinetics>
        <KM evidence="8">50 mM for mM for Na(+)</KM>
        <KM evidence="5">27.5 mM for Na(+)</KM>
    </kinetics>
</comment>
<comment type="subunit">
    <text evidence="6">Interacts with CHP1 and CHP2.</text>
</comment>
<comment type="subcellular location">
    <subcellularLocation>
        <location evidence="2">Apical cell membrane</location>
        <topology evidence="3">Multi-pass membrane protein</topology>
    </subcellularLocation>
    <text evidence="7">Localizes to the brush-border membrane throughout the intestinal tract.</text>
</comment>
<comment type="alternative products">
    <event type="alternative splicing"/>
    <isoform>
        <id>P48763-1</id>
        <name>Long</name>
        <sequence type="displayed"/>
    </isoform>
    <isoform>
        <id>P48763-2</id>
        <name>Short</name>
        <sequence type="described" ref="VSP_003394"/>
    </isoform>
</comment>
<comment type="tissue specificity">
    <text evidence="7">Predominantly in small intestine, colon, and stomach, with much lower levels in skeletal muscle, kidney, brain, testis, uterus, heart and lung.</text>
</comment>
<comment type="similarity">
    <text evidence="12">Belongs to the monovalent cation:proton antiporter 1 (CPA1) transporter (TC 2.A.36) family.</text>
</comment>
<comment type="caution">
    <text evidence="12">The number, localization and denomination of hydrophobic domains in the Na(+)/H(+) exchangers vary among authors.</text>
</comment>
<comment type="caution">
    <text evidence="12">PubMed:8595899 sequence was originally thought to originate from human.</text>
</comment>
<proteinExistence type="evidence at protein level"/>
<gene>
    <name type="primary">Slc9a2</name>
    <name type="synonym">Nhe2</name>
</gene>
<name>SL9A2_RAT</name>
<feature type="chain" id="PRO_0000052354" description="Sodium/hydrogen exchanger 2">
    <location>
        <begin position="1"/>
        <end position="813"/>
    </location>
</feature>
<feature type="transmembrane region" description="Helical" evidence="3">
    <location>
        <begin position="108"/>
        <end position="128"/>
    </location>
</feature>
<feature type="transmembrane region" description="Helical" evidence="3">
    <location>
        <begin position="139"/>
        <end position="159"/>
    </location>
</feature>
<feature type="transmembrane region" description="Helical" evidence="3">
    <location>
        <begin position="170"/>
        <end position="190"/>
    </location>
</feature>
<feature type="transmembrane region" description="Helical" evidence="3">
    <location>
        <begin position="210"/>
        <end position="230"/>
    </location>
</feature>
<feature type="transmembrane region" description="Helical" evidence="3">
    <location>
        <begin position="238"/>
        <end position="258"/>
    </location>
</feature>
<feature type="transmembrane region" description="Helical" evidence="3">
    <location>
        <begin position="279"/>
        <end position="299"/>
    </location>
</feature>
<feature type="transmembrane region" description="Helical" evidence="3">
    <location>
        <begin position="309"/>
        <end position="329"/>
    </location>
</feature>
<feature type="transmembrane region" description="Helical" evidence="3">
    <location>
        <begin position="362"/>
        <end position="382"/>
    </location>
</feature>
<feature type="transmembrane region" description="Helical" evidence="3">
    <location>
        <begin position="393"/>
        <end position="413"/>
    </location>
</feature>
<feature type="transmembrane region" description="Helical" evidence="3">
    <location>
        <begin position="431"/>
        <end position="451"/>
    </location>
</feature>
<feature type="transmembrane region" description="Helical" evidence="3">
    <location>
        <begin position="460"/>
        <end position="480"/>
    </location>
</feature>
<feature type="region of interest" description="Disordered" evidence="4">
    <location>
        <begin position="649"/>
        <end position="709"/>
    </location>
</feature>
<feature type="region of interest" description="Disordered" evidence="4">
    <location>
        <begin position="736"/>
        <end position="813"/>
    </location>
</feature>
<feature type="compositionally biased region" description="Basic and acidic residues" evidence="4">
    <location>
        <begin position="649"/>
        <end position="661"/>
    </location>
</feature>
<feature type="compositionally biased region" description="Polar residues" evidence="4">
    <location>
        <begin position="687"/>
        <end position="696"/>
    </location>
</feature>
<feature type="compositionally biased region" description="Basic and acidic residues" evidence="4">
    <location>
        <begin position="770"/>
        <end position="781"/>
    </location>
</feature>
<feature type="compositionally biased region" description="Basic and acidic residues" evidence="4">
    <location>
        <begin position="797"/>
        <end position="813"/>
    </location>
</feature>
<feature type="glycosylation site" description="N-linked (GlcNAc...) asparagine" evidence="3">
    <location>
        <position position="351"/>
    </location>
</feature>
<feature type="splice variant" id="VSP_003394" description="In isoform Short." evidence="10 11">
    <location>
        <begin position="1"/>
        <end position="116"/>
    </location>
</feature>
<feature type="sequence conflict" description="In Ref. 3; AAB36180." evidence="12" ref="3">
    <original>H</original>
    <variation>HW</variation>
    <location>
        <position position="504"/>
    </location>
</feature>
<feature type="sequence conflict" description="In Ref. 3; AAB36180." evidence="12" ref="3">
    <original>LYQIRQR</original>
    <variation>SLSNPPA</variation>
    <location>
        <begin position="610"/>
        <end position="616"/>
    </location>
</feature>
<feature type="sequence conflict" description="In Ref. 3; AAB36180." evidence="12" ref="3">
    <original>A</original>
    <variation>P</variation>
    <location>
        <position position="742"/>
    </location>
</feature>
<feature type="sequence conflict" description="In Ref. 2; AAA75406." evidence="12" ref="2">
    <original>V</original>
    <variation>G</variation>
    <location>
        <position position="786"/>
    </location>
</feature>
<accession>P48763</accession>
<accession>Q16434</accession>
<organism>
    <name type="scientific">Rattus norvegicus</name>
    <name type="common">Rat</name>
    <dbReference type="NCBI Taxonomy" id="10116"/>
    <lineage>
        <taxon>Eukaryota</taxon>
        <taxon>Metazoa</taxon>
        <taxon>Chordata</taxon>
        <taxon>Craniata</taxon>
        <taxon>Vertebrata</taxon>
        <taxon>Euteleostomi</taxon>
        <taxon>Mammalia</taxon>
        <taxon>Eutheria</taxon>
        <taxon>Euarchontoglires</taxon>
        <taxon>Glires</taxon>
        <taxon>Rodentia</taxon>
        <taxon>Myomorpha</taxon>
        <taxon>Muroidea</taxon>
        <taxon>Muridae</taxon>
        <taxon>Murinae</taxon>
        <taxon>Rattus</taxon>
    </lineage>
</organism>
<protein>
    <recommendedName>
        <fullName>Sodium/hydrogen exchanger 2</fullName>
    </recommendedName>
    <alternativeName>
        <fullName>H7</fullName>
    </alternativeName>
    <alternativeName>
        <fullName>Na(+)/H(+) exchanger 2</fullName>
        <shortName>NHE-2</shortName>
    </alternativeName>
    <alternativeName>
        <fullName>Solute carrier family 9 member 2</fullName>
    </alternativeName>
</protein>
<dbReference type="EMBL" id="L11236">
    <property type="protein sequence ID" value="AAA72350.1"/>
    <property type="molecule type" value="mRNA"/>
</dbReference>
<dbReference type="EMBL" id="L11004">
    <property type="protein sequence ID" value="AAA75406.1"/>
    <property type="molecule type" value="mRNA"/>
</dbReference>
<dbReference type="EMBL" id="S81591">
    <property type="protein sequence ID" value="AAB36180.1"/>
    <property type="molecule type" value="mRNA"/>
</dbReference>
<dbReference type="PIR" id="A46748">
    <property type="entry name" value="A46748"/>
</dbReference>
<dbReference type="PIR" id="A57644">
    <property type="entry name" value="A57644"/>
</dbReference>
<dbReference type="RefSeq" id="NP_001106806.1">
    <molecule id="P48763-1"/>
    <property type="nucleotide sequence ID" value="NM_001113335.1"/>
</dbReference>
<dbReference type="RefSeq" id="NP_036785.2">
    <molecule id="P48763-2"/>
    <property type="nucleotide sequence ID" value="NM_012653.2"/>
</dbReference>
<dbReference type="SMR" id="P48763"/>
<dbReference type="FunCoup" id="P48763">
    <property type="interactions" value="57"/>
</dbReference>
<dbReference type="IntAct" id="P48763">
    <property type="interactions" value="2"/>
</dbReference>
<dbReference type="STRING" id="10116.ENSRNOP00000021270"/>
<dbReference type="ChEMBL" id="CHEMBL3886122"/>
<dbReference type="GlyCosmos" id="P48763">
    <property type="glycosylation" value="1 site, No reported glycans"/>
</dbReference>
<dbReference type="GlyGen" id="P48763">
    <property type="glycosylation" value="2 sites"/>
</dbReference>
<dbReference type="iPTMnet" id="P48763"/>
<dbReference type="PhosphoSitePlus" id="P48763"/>
<dbReference type="PaxDb" id="10116-ENSRNOP00000021270"/>
<dbReference type="Ensembl" id="ENSRNOT00000021270.7">
    <molecule id="P48763-1"/>
    <property type="protein sequence ID" value="ENSRNOP00000021270.4"/>
    <property type="gene ID" value="ENSRNOG00000015567.8"/>
</dbReference>
<dbReference type="GeneID" id="24783"/>
<dbReference type="KEGG" id="rno:24783"/>
<dbReference type="UCSC" id="RGD:3719">
    <molecule id="P48763-1"/>
    <property type="organism name" value="rat"/>
</dbReference>
<dbReference type="AGR" id="RGD:3719"/>
<dbReference type="CTD" id="6549"/>
<dbReference type="RGD" id="3719">
    <property type="gene designation" value="Slc9a2"/>
</dbReference>
<dbReference type="eggNOG" id="KOG1966">
    <property type="taxonomic scope" value="Eukaryota"/>
</dbReference>
<dbReference type="GeneTree" id="ENSGT00940000156807"/>
<dbReference type="HOGENOM" id="CLU_005912_4_3_1"/>
<dbReference type="InParanoid" id="P48763"/>
<dbReference type="OMA" id="INMFRTI"/>
<dbReference type="OrthoDB" id="196264at2759"/>
<dbReference type="PhylomeDB" id="P48763"/>
<dbReference type="TreeFam" id="TF317212"/>
<dbReference type="Reactome" id="R-RNO-425986">
    <property type="pathway name" value="Sodium/Proton exchangers"/>
</dbReference>
<dbReference type="PRO" id="PR:P48763"/>
<dbReference type="Proteomes" id="UP000002494">
    <property type="component" value="Chromosome 9"/>
</dbReference>
<dbReference type="Bgee" id="ENSRNOG00000015567">
    <property type="expression patterns" value="Expressed in jejunum and 15 other cell types or tissues"/>
</dbReference>
<dbReference type="GO" id="GO:0016324">
    <property type="term" value="C:apical plasma membrane"/>
    <property type="evidence" value="ECO:0000250"/>
    <property type="project" value="UniProtKB"/>
</dbReference>
<dbReference type="GO" id="GO:0005886">
    <property type="term" value="C:plasma membrane"/>
    <property type="evidence" value="ECO:0000318"/>
    <property type="project" value="GO_Central"/>
</dbReference>
<dbReference type="GO" id="GO:0015386">
    <property type="term" value="F:potassium:proton antiporter activity"/>
    <property type="evidence" value="ECO:0000318"/>
    <property type="project" value="GO_Central"/>
</dbReference>
<dbReference type="GO" id="GO:0015385">
    <property type="term" value="F:sodium:proton antiporter activity"/>
    <property type="evidence" value="ECO:0000314"/>
    <property type="project" value="UniProtKB"/>
</dbReference>
<dbReference type="GO" id="GO:0030855">
    <property type="term" value="P:epithelial cell differentiation"/>
    <property type="evidence" value="ECO:0000266"/>
    <property type="project" value="RGD"/>
</dbReference>
<dbReference type="GO" id="GO:0071805">
    <property type="term" value="P:potassium ion transmembrane transport"/>
    <property type="evidence" value="ECO:0000318"/>
    <property type="project" value="GO_Central"/>
</dbReference>
<dbReference type="GO" id="GO:0008104">
    <property type="term" value="P:protein localization"/>
    <property type="evidence" value="ECO:0000266"/>
    <property type="project" value="RGD"/>
</dbReference>
<dbReference type="GO" id="GO:0051453">
    <property type="term" value="P:regulation of intracellular pH"/>
    <property type="evidence" value="ECO:0000266"/>
    <property type="project" value="RGD"/>
</dbReference>
<dbReference type="GO" id="GO:0006885">
    <property type="term" value="P:regulation of pH"/>
    <property type="evidence" value="ECO:0000266"/>
    <property type="project" value="RGD"/>
</dbReference>
<dbReference type="GO" id="GO:0098719">
    <property type="term" value="P:sodium ion import across plasma membrane"/>
    <property type="evidence" value="ECO:0000318"/>
    <property type="project" value="GO_Central"/>
</dbReference>
<dbReference type="GO" id="GO:0035725">
    <property type="term" value="P:sodium ion transmembrane transport"/>
    <property type="evidence" value="ECO:0000314"/>
    <property type="project" value="UniProtKB"/>
</dbReference>
<dbReference type="GO" id="GO:0006814">
    <property type="term" value="P:sodium ion transport"/>
    <property type="evidence" value="ECO:0000266"/>
    <property type="project" value="RGD"/>
</dbReference>
<dbReference type="Gene3D" id="6.10.140.1330">
    <property type="match status" value="1"/>
</dbReference>
<dbReference type="Gene3D" id="6.10.250.1040">
    <property type="match status" value="1"/>
</dbReference>
<dbReference type="Gene3D" id="6.10.250.2020">
    <property type="match status" value="1"/>
</dbReference>
<dbReference type="InterPro" id="IPR018422">
    <property type="entry name" value="Cation/H_exchanger_CPA1"/>
</dbReference>
<dbReference type="InterPro" id="IPR006153">
    <property type="entry name" value="Cation/H_exchanger_TM"/>
</dbReference>
<dbReference type="InterPro" id="IPR004709">
    <property type="entry name" value="NaH_exchanger"/>
</dbReference>
<dbReference type="InterPro" id="IPR001953">
    <property type="entry name" value="NHE-2/4"/>
</dbReference>
<dbReference type="InterPro" id="IPR032103">
    <property type="entry name" value="NHE_CaM-bd"/>
</dbReference>
<dbReference type="NCBIfam" id="TIGR00840">
    <property type="entry name" value="b_cpa1"/>
    <property type="match status" value="1"/>
</dbReference>
<dbReference type="PANTHER" id="PTHR10110">
    <property type="entry name" value="SODIUM/HYDROGEN EXCHANGER"/>
    <property type="match status" value="1"/>
</dbReference>
<dbReference type="PANTHER" id="PTHR10110:SF89">
    <property type="entry name" value="SODIUM_HYDROGEN EXCHANGER 2"/>
    <property type="match status" value="1"/>
</dbReference>
<dbReference type="Pfam" id="PF00999">
    <property type="entry name" value="Na_H_Exchanger"/>
    <property type="match status" value="1"/>
</dbReference>
<dbReference type="Pfam" id="PF16644">
    <property type="entry name" value="NEXCaM_BD"/>
    <property type="match status" value="1"/>
</dbReference>
<dbReference type="PRINTS" id="PR01084">
    <property type="entry name" value="NAHEXCHNGR"/>
</dbReference>
<dbReference type="PRINTS" id="PR01086">
    <property type="entry name" value="NAHEXCHNGR2"/>
</dbReference>
<keyword id="KW-0025">Alternative splicing</keyword>
<keyword id="KW-0050">Antiport</keyword>
<keyword id="KW-1003">Cell membrane</keyword>
<keyword id="KW-0325">Glycoprotein</keyword>
<keyword id="KW-0406">Ion transport</keyword>
<keyword id="KW-0472">Membrane</keyword>
<keyword id="KW-1185">Reference proteome</keyword>
<keyword id="KW-0915">Sodium</keyword>
<keyword id="KW-0739">Sodium transport</keyword>
<keyword id="KW-0812">Transmembrane</keyword>
<keyword id="KW-1133">Transmembrane helix</keyword>
<keyword id="KW-0813">Transport</keyword>
<reference key="1">
    <citation type="journal article" date="1993" name="J. Biol. Chem.">
        <title>Primary structure and functional expression of a novel gastrointestinal isoform of the rat Na/H exchanger.</title>
        <authorList>
            <person name="Wang Z."/>
            <person name="Orlowski J."/>
            <person name="Shull G.E."/>
        </authorList>
    </citation>
    <scope>NUCLEOTIDE SEQUENCE [MRNA] (ISOFORM LONG)</scope>
    <scope>TISSUE SPECIFICITY</scope>
    <source>
        <tissue>Stomach</tissue>
    </source>
</reference>
<reference key="2">
    <citation type="journal article" date="1993" name="Proc. Natl. Acad. Sci. U.S.A.">
        <title>Molecular cloning, sequencing, tissue distribution, and functional expression of a Na+/H+ exchanger (NHE-2).</title>
        <authorList>
            <person name="Collins J.F."/>
            <person name="Honda T."/>
            <person name="Knobel S."/>
            <person name="Bulus N.M."/>
            <person name="Conary J."/>
            <person name="Dubois R."/>
            <person name="Ghishan F.K."/>
        </authorList>
    </citation>
    <scope>NUCLEOTIDE SEQUENCE [MRNA] (ISOFORM SHORT)</scope>
    <source>
        <strain>Sprague-Dawley</strain>
        <tissue>Small intestine</tissue>
    </source>
</reference>
<reference key="3">
    <citation type="journal article" date="1995" name="Genomics">
        <title>Molecular cloning, sequencing, chromosomal localization, and tissue distribution of the human Na+/H+ exchanger (SLC9A2).</title>
        <authorList>
            <person name="Ghishan F.K."/>
            <person name="Knobel S.M."/>
            <person name="Summar M."/>
        </authorList>
    </citation>
    <scope>NUCLEOTIDE SEQUENCE [MRNA] (ISOFORM SHORT)</scope>
    <source>
        <tissue>Liver</tissue>
    </source>
</reference>
<reference key="4">
    <citation type="journal article" date="1993" name="J. Biol. Chem.">
        <title>Kinetics and regulation of three cloned mammalian Na+/H+ exchangers stably expressed in a fibroblast cell line.</title>
        <authorList>
            <person name="Levine S.A."/>
            <person name="Montrose M.H."/>
            <person name="Tse C.M."/>
            <person name="Donowitz M."/>
        </authorList>
    </citation>
    <scope>BIOPHYSICOCHEMICAL PROPERTIES</scope>
    <scope>FUNCTION</scope>
    <scope>TRANSPORTER ACTIVITY</scope>
</reference>
<reference key="5">
    <citation type="journal article" date="1993" name="J. Biol. Chem.">
        <title>Functional properties of the rat Na/H exchanger NHE-2 isoform expressed in Na/H exchanger-deficient Chinese hamster ovary cells.</title>
        <authorList>
            <person name="Yu F.H."/>
            <person name="Shull G.E."/>
            <person name="Orlowski J."/>
        </authorList>
    </citation>
    <scope>FUNCTION</scope>
    <scope>TRANSPORTER ACTIVITY</scope>
</reference>
<reference key="6">
    <citation type="journal article" date="2000" name="Pflugers Arch.">
        <title>Lithium activates mammalian Na+/H+ exchangers: isoform specificity and inhibition by genistein.</title>
        <authorList>
            <person name="Kobayashi Y."/>
            <person name="Pang T."/>
            <person name="Iwamoto T."/>
            <person name="Wakabayashi S."/>
            <person name="Shigekawa M."/>
        </authorList>
    </citation>
    <scope>FUNCTION</scope>
    <scope>TRANSPORTER ACTIVITY</scope>
    <scope>BIOPHYSICOCHEMICAL PROPERTIES</scope>
    <scope>ACTIVITY REGULATION</scope>
</reference>
<reference key="7">
    <citation type="journal article" date="2003" name="Biol. Pharm. Bull.">
        <title>Calcineurin homologous protein isoform 2 (CHP2), Na+/H+ exchangers-binding protein, is expressed in intestinal epithelium.</title>
        <authorList>
            <person name="Inoue H."/>
            <person name="Nakamura Y."/>
            <person name="Nagita M."/>
            <person name="Takai T."/>
            <person name="Masuda M."/>
            <person name="Nakamura N."/>
            <person name="Kanazawa H."/>
        </authorList>
    </citation>
    <scope>INTERACTION WITH CHP1 AND CHP2</scope>
</reference>
<reference key="8">
    <citation type="journal article" date="2012" name="Nat. Commun.">
        <title>Quantitative maps of protein phosphorylation sites across 14 different rat organs and tissues.</title>
        <authorList>
            <person name="Lundby A."/>
            <person name="Secher A."/>
            <person name="Lage K."/>
            <person name="Nordsborg N.B."/>
            <person name="Dmytriyev A."/>
            <person name="Lundby C."/>
            <person name="Olsen J.V."/>
        </authorList>
    </citation>
    <scope>IDENTIFICATION BY MASS SPECTROMETRY [LARGE SCALE ANALYSIS]</scope>
</reference>
<sequence length="813" mass="91403">MGPSGTAHRMRAPLSWLLLLLLSLQVAVPAGALAETLLDAPGARGASSNPPSPASVVAPGTTPFEESRLPVFTLDYPHVQIPFEITLWILLASLAKIGFHLYHKLPTIVPESCLLIMVGLLLGGIIFGVDEKSPPAMKTDVFFLYLLPPIVLDAGYFMPTRPFFENLGTIFWYAVVGTLWNSIGIGLSLFGICQIEAFGLSDITLLQNLLFGSLISAVDPVAVLAVFENIHVNEQLYILVFGESLLNDAVTVVLYNLFKSFCQMKTIQTVDVFAGIANFFVVGIGGVLIGILLGFIAAFTTRFTHNIRVIEPLFVFLYSYLSYITAEMFHLSGIMAITACAMTMNKYVEENVSQKSYTTIKYFMKMLSSVSETLIFIFMGVSTVGKNHEWNWAFVCFTLAFCLIWRALGVFVLTQVINWFRTIPLTFKDQFIIAYGGLRGAICFALVFLLPATVFPRKKLFITAAIVVIFFTVFILGITIRPLVEFLDVKRSNKKQQAVSEEIHCRFFDHVKTGIEDVCGHWGHNFWRDKFKKFDDKYLRKLLIRENQPKSSIVSLYKKLEIKHAIEMAETGMISTVPSFASLNDCREEKIRKLTPGEMDEIREILSRNLYQIRQRTLSYNRHNLTADTSERQAKEILIRRRHSLRESLRKDNSLNRERRASTSTSRYLSLPKNTKLPEKLQKKNKVSNADGNSSDSDMDGTTVLNLQPRARRFLPDQFSKKASPAYKMEWKNEVDVGSARAPPSVTPAPRSKEGGTQTPGVLRQPLLSKDQRFGRGREDSLTEDVPPKPPPRLVRRASEPGNRKGRLGNEKP</sequence>
<evidence type="ECO:0000250" key="1">
    <source>
        <dbReference type="UniProtKB" id="Q3ZAS0"/>
    </source>
</evidence>
<evidence type="ECO:0000250" key="2">
    <source>
        <dbReference type="UniProtKB" id="Q9UBY0"/>
    </source>
</evidence>
<evidence type="ECO:0000255" key="3"/>
<evidence type="ECO:0000256" key="4">
    <source>
        <dbReference type="SAM" id="MobiDB-lite"/>
    </source>
</evidence>
<evidence type="ECO:0000269" key="5">
    <source>
    </source>
</evidence>
<evidence type="ECO:0000269" key="6">
    <source>
    </source>
</evidence>
<evidence type="ECO:0000269" key="7">
    <source>
    </source>
</evidence>
<evidence type="ECO:0000269" key="8">
    <source>
    </source>
</evidence>
<evidence type="ECO:0000269" key="9">
    <source>
    </source>
</evidence>
<evidence type="ECO:0000303" key="10">
    <source>
    </source>
</evidence>
<evidence type="ECO:0000303" key="11">
    <source>
    </source>
</evidence>
<evidence type="ECO:0000305" key="12"/>